<gene>
    <name evidence="1" type="primary">dapB</name>
    <name type="ordered locus">WRi_004200</name>
</gene>
<sequence length="261" mass="28231">MKIRVGVIGCLGRMGKKILNELITNTKVEIAGAVARSGSKYIDSDIGPIIANLGIKVTSSISDVFESSDVVIDFTTKECMLDCLKAAVKFKTPLVSGTTGIEGVDLKEYAAEVPILWSANMSVGVNVLLKLVKKAAELLGNEYDVEIWEMHHNLKKDSPSGTAIELGKTIANASKVDFQSNQYLHSGSNIRKKGGIGFAVSRGGGVIGDHSVMFVNSDERIELNHKAIDRTTFARGAVQAAVWLYENKREIPGLYSMQDVI</sequence>
<proteinExistence type="inferred from homology"/>
<reference key="1">
    <citation type="journal article" date="2009" name="Proc. Natl. Acad. Sci. U.S.A.">
        <title>The mosaic genome structure of the Wolbachia wRi strain infecting Drosophila simulans.</title>
        <authorList>
            <person name="Klasson L."/>
            <person name="Westberg J."/>
            <person name="Sapountzis P."/>
            <person name="Naeslund K."/>
            <person name="Lutnaes Y."/>
            <person name="Darby A.C."/>
            <person name="Veneti Z."/>
            <person name="Chen L."/>
            <person name="Braig H.R."/>
            <person name="Garrett R."/>
            <person name="Bourtzis K."/>
            <person name="Andersson S.G."/>
        </authorList>
    </citation>
    <scope>NUCLEOTIDE SEQUENCE [LARGE SCALE GENOMIC DNA]</scope>
    <source>
        <strain>wRi</strain>
    </source>
</reference>
<accession>C0R2S2</accession>
<keyword id="KW-0028">Amino-acid biosynthesis</keyword>
<keyword id="KW-0963">Cytoplasm</keyword>
<keyword id="KW-0220">Diaminopimelate biosynthesis</keyword>
<keyword id="KW-0457">Lysine biosynthesis</keyword>
<keyword id="KW-0520">NAD</keyword>
<keyword id="KW-0521">NADP</keyword>
<keyword id="KW-0560">Oxidoreductase</keyword>
<feature type="chain" id="PRO_1000189767" description="4-hydroxy-tetrahydrodipicolinate reductase">
    <location>
        <begin position="1"/>
        <end position="261"/>
    </location>
</feature>
<feature type="active site" description="Proton donor/acceptor" evidence="1">
    <location>
        <position position="151"/>
    </location>
</feature>
<feature type="active site" description="Proton donor" evidence="1">
    <location>
        <position position="155"/>
    </location>
</feature>
<feature type="binding site" evidence="1">
    <location>
        <begin position="9"/>
        <end position="14"/>
    </location>
    <ligand>
        <name>NAD(+)</name>
        <dbReference type="ChEBI" id="CHEBI:57540"/>
    </ligand>
</feature>
<feature type="binding site" evidence="1">
    <location>
        <position position="36"/>
    </location>
    <ligand>
        <name>NADP(+)</name>
        <dbReference type="ChEBI" id="CHEBI:58349"/>
    </ligand>
</feature>
<feature type="binding site" evidence="1">
    <location>
        <begin position="97"/>
        <end position="99"/>
    </location>
    <ligand>
        <name>NAD(+)</name>
        <dbReference type="ChEBI" id="CHEBI:57540"/>
    </ligand>
</feature>
<feature type="binding site" evidence="1">
    <location>
        <begin position="118"/>
        <end position="121"/>
    </location>
    <ligand>
        <name>NAD(+)</name>
        <dbReference type="ChEBI" id="CHEBI:57540"/>
    </ligand>
</feature>
<feature type="binding site" evidence="1">
    <location>
        <position position="152"/>
    </location>
    <ligand>
        <name>(S)-2,3,4,5-tetrahydrodipicolinate</name>
        <dbReference type="ChEBI" id="CHEBI:16845"/>
    </ligand>
</feature>
<feature type="binding site" evidence="1">
    <location>
        <begin position="161"/>
        <end position="162"/>
    </location>
    <ligand>
        <name>(S)-2,3,4,5-tetrahydrodipicolinate</name>
        <dbReference type="ChEBI" id="CHEBI:16845"/>
    </ligand>
</feature>
<comment type="function">
    <text evidence="1">Catalyzes the conversion of 4-hydroxy-tetrahydrodipicolinate (HTPA) to tetrahydrodipicolinate.</text>
</comment>
<comment type="catalytic activity">
    <reaction evidence="1">
        <text>(S)-2,3,4,5-tetrahydrodipicolinate + NAD(+) + H2O = (2S,4S)-4-hydroxy-2,3,4,5-tetrahydrodipicolinate + NADH + H(+)</text>
        <dbReference type="Rhea" id="RHEA:35323"/>
        <dbReference type="ChEBI" id="CHEBI:15377"/>
        <dbReference type="ChEBI" id="CHEBI:15378"/>
        <dbReference type="ChEBI" id="CHEBI:16845"/>
        <dbReference type="ChEBI" id="CHEBI:57540"/>
        <dbReference type="ChEBI" id="CHEBI:57945"/>
        <dbReference type="ChEBI" id="CHEBI:67139"/>
        <dbReference type="EC" id="1.17.1.8"/>
    </reaction>
</comment>
<comment type="catalytic activity">
    <reaction evidence="1">
        <text>(S)-2,3,4,5-tetrahydrodipicolinate + NADP(+) + H2O = (2S,4S)-4-hydroxy-2,3,4,5-tetrahydrodipicolinate + NADPH + H(+)</text>
        <dbReference type="Rhea" id="RHEA:35331"/>
        <dbReference type="ChEBI" id="CHEBI:15377"/>
        <dbReference type="ChEBI" id="CHEBI:15378"/>
        <dbReference type="ChEBI" id="CHEBI:16845"/>
        <dbReference type="ChEBI" id="CHEBI:57783"/>
        <dbReference type="ChEBI" id="CHEBI:58349"/>
        <dbReference type="ChEBI" id="CHEBI:67139"/>
        <dbReference type="EC" id="1.17.1.8"/>
    </reaction>
</comment>
<comment type="pathway">
    <text evidence="1">Amino-acid biosynthesis; L-lysine biosynthesis via DAP pathway; (S)-tetrahydrodipicolinate from L-aspartate: step 4/4.</text>
</comment>
<comment type="subcellular location">
    <subcellularLocation>
        <location evidence="1">Cytoplasm</location>
    </subcellularLocation>
</comment>
<comment type="similarity">
    <text evidence="1">Belongs to the DapB family.</text>
</comment>
<comment type="caution">
    <text evidence="2">Was originally thought to be a dihydrodipicolinate reductase (DHDPR), catalyzing the conversion of dihydrodipicolinate to tetrahydrodipicolinate. However, it was shown in E.coli that the substrate of the enzymatic reaction is not dihydrodipicolinate (DHDP) but in fact (2S,4S)-4-hydroxy-2,3,4,5-tetrahydrodipicolinic acid (HTPA), the product released by the DapA-catalyzed reaction.</text>
</comment>
<evidence type="ECO:0000255" key="1">
    <source>
        <dbReference type="HAMAP-Rule" id="MF_00102"/>
    </source>
</evidence>
<evidence type="ECO:0000305" key="2"/>
<name>DAPB_WOLWR</name>
<protein>
    <recommendedName>
        <fullName evidence="1">4-hydroxy-tetrahydrodipicolinate reductase</fullName>
        <shortName evidence="1">HTPA reductase</shortName>
        <ecNumber evidence="1">1.17.1.8</ecNumber>
    </recommendedName>
</protein>
<dbReference type="EC" id="1.17.1.8" evidence="1"/>
<dbReference type="EMBL" id="CP001391">
    <property type="protein sequence ID" value="ACN95214.1"/>
    <property type="molecule type" value="Genomic_DNA"/>
</dbReference>
<dbReference type="RefSeq" id="WP_012673154.1">
    <property type="nucleotide sequence ID" value="NZ_MKIF01000185.1"/>
</dbReference>
<dbReference type="SMR" id="C0R2S2"/>
<dbReference type="STRING" id="66084.WRi_004200"/>
<dbReference type="KEGG" id="wri:WRi_004200"/>
<dbReference type="HOGENOM" id="CLU_047479_2_2_5"/>
<dbReference type="UniPathway" id="UPA00034">
    <property type="reaction ID" value="UER00018"/>
</dbReference>
<dbReference type="Proteomes" id="UP000001293">
    <property type="component" value="Chromosome"/>
</dbReference>
<dbReference type="GO" id="GO:0005737">
    <property type="term" value="C:cytoplasm"/>
    <property type="evidence" value="ECO:0007669"/>
    <property type="project" value="UniProtKB-SubCell"/>
</dbReference>
<dbReference type="GO" id="GO:0008839">
    <property type="term" value="F:4-hydroxy-tetrahydrodipicolinate reductase"/>
    <property type="evidence" value="ECO:0007669"/>
    <property type="project" value="UniProtKB-EC"/>
</dbReference>
<dbReference type="GO" id="GO:0051287">
    <property type="term" value="F:NAD binding"/>
    <property type="evidence" value="ECO:0007669"/>
    <property type="project" value="UniProtKB-UniRule"/>
</dbReference>
<dbReference type="GO" id="GO:0050661">
    <property type="term" value="F:NADP binding"/>
    <property type="evidence" value="ECO:0007669"/>
    <property type="project" value="UniProtKB-UniRule"/>
</dbReference>
<dbReference type="GO" id="GO:0016726">
    <property type="term" value="F:oxidoreductase activity, acting on CH or CH2 groups, NAD or NADP as acceptor"/>
    <property type="evidence" value="ECO:0007669"/>
    <property type="project" value="UniProtKB-UniRule"/>
</dbReference>
<dbReference type="GO" id="GO:0019877">
    <property type="term" value="P:diaminopimelate biosynthetic process"/>
    <property type="evidence" value="ECO:0007669"/>
    <property type="project" value="UniProtKB-UniRule"/>
</dbReference>
<dbReference type="GO" id="GO:0009089">
    <property type="term" value="P:lysine biosynthetic process via diaminopimelate"/>
    <property type="evidence" value="ECO:0007669"/>
    <property type="project" value="UniProtKB-UniRule"/>
</dbReference>
<dbReference type="CDD" id="cd02274">
    <property type="entry name" value="DHDPR_N"/>
    <property type="match status" value="1"/>
</dbReference>
<dbReference type="Gene3D" id="3.30.360.10">
    <property type="entry name" value="Dihydrodipicolinate Reductase, domain 2"/>
    <property type="match status" value="1"/>
</dbReference>
<dbReference type="Gene3D" id="3.40.50.720">
    <property type="entry name" value="NAD(P)-binding Rossmann-like Domain"/>
    <property type="match status" value="1"/>
</dbReference>
<dbReference type="HAMAP" id="MF_00102">
    <property type="entry name" value="DapB"/>
    <property type="match status" value="1"/>
</dbReference>
<dbReference type="InterPro" id="IPR022663">
    <property type="entry name" value="DapB_C"/>
</dbReference>
<dbReference type="InterPro" id="IPR000846">
    <property type="entry name" value="DapB_N"/>
</dbReference>
<dbReference type="InterPro" id="IPR022664">
    <property type="entry name" value="DapB_N_CS"/>
</dbReference>
<dbReference type="InterPro" id="IPR023940">
    <property type="entry name" value="DHDPR_bac"/>
</dbReference>
<dbReference type="InterPro" id="IPR036291">
    <property type="entry name" value="NAD(P)-bd_dom_sf"/>
</dbReference>
<dbReference type="NCBIfam" id="TIGR00036">
    <property type="entry name" value="dapB"/>
    <property type="match status" value="1"/>
</dbReference>
<dbReference type="PANTHER" id="PTHR20836:SF0">
    <property type="entry name" value="4-HYDROXY-TETRAHYDRODIPICOLINATE REDUCTASE 1, CHLOROPLASTIC-RELATED"/>
    <property type="match status" value="1"/>
</dbReference>
<dbReference type="PANTHER" id="PTHR20836">
    <property type="entry name" value="DIHYDRODIPICOLINATE REDUCTASE"/>
    <property type="match status" value="1"/>
</dbReference>
<dbReference type="Pfam" id="PF05173">
    <property type="entry name" value="DapB_C"/>
    <property type="match status" value="1"/>
</dbReference>
<dbReference type="Pfam" id="PF01113">
    <property type="entry name" value="DapB_N"/>
    <property type="match status" value="1"/>
</dbReference>
<dbReference type="PIRSF" id="PIRSF000161">
    <property type="entry name" value="DHPR"/>
    <property type="match status" value="1"/>
</dbReference>
<dbReference type="SUPFAM" id="SSF55347">
    <property type="entry name" value="Glyceraldehyde-3-phosphate dehydrogenase-like, C-terminal domain"/>
    <property type="match status" value="1"/>
</dbReference>
<dbReference type="SUPFAM" id="SSF51735">
    <property type="entry name" value="NAD(P)-binding Rossmann-fold domains"/>
    <property type="match status" value="1"/>
</dbReference>
<dbReference type="PROSITE" id="PS01298">
    <property type="entry name" value="DAPB"/>
    <property type="match status" value="1"/>
</dbReference>
<organism>
    <name type="scientific">Wolbachia sp. subsp. Drosophila simulans (strain wRi)</name>
    <dbReference type="NCBI Taxonomy" id="66084"/>
    <lineage>
        <taxon>Bacteria</taxon>
        <taxon>Pseudomonadati</taxon>
        <taxon>Pseudomonadota</taxon>
        <taxon>Alphaproteobacteria</taxon>
        <taxon>Rickettsiales</taxon>
        <taxon>Anaplasmataceae</taxon>
        <taxon>Wolbachieae</taxon>
        <taxon>Wolbachia</taxon>
    </lineage>
</organism>